<accession>A6T4I3</accession>
<feature type="chain" id="PRO_1000068461" description="Glutathione-regulated potassium-efflux system protein KefC">
    <location>
        <begin position="1"/>
        <end position="621"/>
    </location>
</feature>
<feature type="transmembrane region" description="Helical" evidence="1">
    <location>
        <begin position="4"/>
        <end position="24"/>
    </location>
</feature>
<feature type="transmembrane region" description="Helical" evidence="1">
    <location>
        <begin position="26"/>
        <end position="46"/>
    </location>
</feature>
<feature type="transmembrane region" description="Helical" evidence="1">
    <location>
        <begin position="54"/>
        <end position="74"/>
    </location>
</feature>
<feature type="transmembrane region" description="Helical" evidence="1">
    <location>
        <begin position="90"/>
        <end position="110"/>
    </location>
</feature>
<feature type="transmembrane region" description="Helical" evidence="1">
    <location>
        <begin position="114"/>
        <end position="134"/>
    </location>
</feature>
<feature type="transmembrane region" description="Helical" evidence="1">
    <location>
        <begin position="149"/>
        <end position="169"/>
    </location>
</feature>
<feature type="transmembrane region" description="Helical" evidence="1">
    <location>
        <begin position="178"/>
        <end position="198"/>
    </location>
</feature>
<feature type="transmembrane region" description="Helical" evidence="1">
    <location>
        <begin position="218"/>
        <end position="237"/>
    </location>
</feature>
<feature type="transmembrane region" description="Helical" evidence="1">
    <location>
        <begin position="238"/>
        <end position="257"/>
    </location>
</feature>
<feature type="transmembrane region" description="Helical" evidence="1">
    <location>
        <begin position="270"/>
        <end position="290"/>
    </location>
</feature>
<feature type="transmembrane region" description="Helical" evidence="1">
    <location>
        <begin position="294"/>
        <end position="314"/>
    </location>
</feature>
<feature type="transmembrane region" description="Helical" evidence="1">
    <location>
        <begin position="326"/>
        <end position="346"/>
    </location>
</feature>
<feature type="transmembrane region" description="Helical" evidence="1">
    <location>
        <begin position="359"/>
        <end position="379"/>
    </location>
</feature>
<feature type="domain" description="RCK N-terminal" evidence="2">
    <location>
        <begin position="399"/>
        <end position="518"/>
    </location>
</feature>
<feature type="region of interest" description="Disordered" evidence="3">
    <location>
        <begin position="598"/>
        <end position="621"/>
    </location>
</feature>
<sequence>MDSHTLIQALIYLGAAALIVPIAVRLGLGSVLGYLIAGCIIGPWALRLVTDAEAILHFAEIGVVLMLFVIGLELDPQRLWKLRASVFGGGALQMVACGVLIGLFCMLLGLRWQVAELIGMTLALSSTAIAMQAMNERNLTVSQMGRSAFAVLLFQDIAAIPLVAMIPLLAASGGATSLMAFALSALKVAAALALVVVLGRYLTRPLLRFVARSGLREVFSAVALFLVFGFGLLLEEVGLSMAMGAFLAGVLLASSEYRHALESDIEPFKGLLLGLFFIGVGMSIDFGTLVTHPLRIVILLVGFLAIKMLMLWLIARPLGVPRAQRRWFAVLLGQGSEFAFVVFGAARMADVLDGEWAKALTLAVALSMAATPILLVLLTRLEKSSSGQARDADEIDEEQPRVIVAGFGRFGQIAGRLLLSSGVKMVILDHDPDHVDTLRKFDMKVFYGDATRVDLLESAGAEKAEVLINAIDDPHVSLELVARVKEHFPHLQIISRARDVDHYIQLRQAGVEAPERETFEAALKSGRMTLEALGLGAYEARERADLFRRFNLQMVEEMVAMAENDAASRVAVFKRTSDMLTGIINEDRHHLSLVQRHGWQGTEEGRHTGDIADEPENKPSA</sequence>
<gene>
    <name evidence="1" type="primary">kefC</name>
    <name type="ordered locus">KPN78578_00430</name>
    <name type="ORF">KPN_00044</name>
</gene>
<name>KEFC_KLEP7</name>
<keyword id="KW-0050">Antiport</keyword>
<keyword id="KW-0997">Cell inner membrane</keyword>
<keyword id="KW-1003">Cell membrane</keyword>
<keyword id="KW-0406">Ion transport</keyword>
<keyword id="KW-0472">Membrane</keyword>
<keyword id="KW-0630">Potassium</keyword>
<keyword id="KW-0633">Potassium transport</keyword>
<keyword id="KW-0812">Transmembrane</keyword>
<keyword id="KW-1133">Transmembrane helix</keyword>
<keyword id="KW-0813">Transport</keyword>
<reference key="1">
    <citation type="submission" date="2006-09" db="EMBL/GenBank/DDBJ databases">
        <authorList>
            <consortium name="The Klebsiella pneumonia Genome Sequencing Project"/>
            <person name="McClelland M."/>
            <person name="Sanderson E.K."/>
            <person name="Spieth J."/>
            <person name="Clifton W.S."/>
            <person name="Latreille P."/>
            <person name="Sabo A."/>
            <person name="Pepin K."/>
            <person name="Bhonagiri V."/>
            <person name="Porwollik S."/>
            <person name="Ali J."/>
            <person name="Wilson R.K."/>
        </authorList>
    </citation>
    <scope>NUCLEOTIDE SEQUENCE [LARGE SCALE GENOMIC DNA]</scope>
    <source>
        <strain>ATCC 700721 / MGH 78578</strain>
    </source>
</reference>
<protein>
    <recommendedName>
        <fullName evidence="1">Glutathione-regulated potassium-efflux system protein KefC</fullName>
    </recommendedName>
    <alternativeName>
        <fullName evidence="1">K(+)/H(+) antiporter</fullName>
    </alternativeName>
</protein>
<comment type="function">
    <text evidence="1">Pore-forming subunit of a potassium efflux system that confers protection against electrophiles. Catalyzes K(+)/H(+) antiport.</text>
</comment>
<comment type="subunit">
    <text evidence="1">Homodimer. Interacts with the regulatory subunit KefF.</text>
</comment>
<comment type="subcellular location">
    <subcellularLocation>
        <location evidence="1">Cell inner membrane</location>
        <topology evidence="1">Multi-pass membrane protein</topology>
    </subcellularLocation>
</comment>
<comment type="similarity">
    <text evidence="1">Belongs to the monovalent cation:proton antiporter 2 (CPA2) transporter (TC 2.A.37) family. KefC subfamily.</text>
</comment>
<evidence type="ECO:0000255" key="1">
    <source>
        <dbReference type="HAMAP-Rule" id="MF_01413"/>
    </source>
</evidence>
<evidence type="ECO:0000255" key="2">
    <source>
        <dbReference type="PROSITE-ProRule" id="PRU00543"/>
    </source>
</evidence>
<evidence type="ECO:0000256" key="3">
    <source>
        <dbReference type="SAM" id="MobiDB-lite"/>
    </source>
</evidence>
<dbReference type="EMBL" id="CP000647">
    <property type="protein sequence ID" value="ABR75504.1"/>
    <property type="molecule type" value="Genomic_DNA"/>
</dbReference>
<dbReference type="RefSeq" id="WP_004145992.1">
    <property type="nucleotide sequence ID" value="NC_009648.1"/>
</dbReference>
<dbReference type="SMR" id="A6T4I3"/>
<dbReference type="STRING" id="272620.KPN_00044"/>
<dbReference type="PaxDb" id="272620-KPN_00044"/>
<dbReference type="DNASU" id="5341758"/>
<dbReference type="EnsemblBacteria" id="ABR75504">
    <property type="protein sequence ID" value="ABR75504"/>
    <property type="gene ID" value="KPN_00044"/>
</dbReference>
<dbReference type="KEGG" id="kpn:KPN_00044"/>
<dbReference type="HOGENOM" id="CLU_005126_9_3_6"/>
<dbReference type="Proteomes" id="UP000000265">
    <property type="component" value="Chromosome"/>
</dbReference>
<dbReference type="GO" id="GO:0005886">
    <property type="term" value="C:plasma membrane"/>
    <property type="evidence" value="ECO:0007669"/>
    <property type="project" value="UniProtKB-SubCell"/>
</dbReference>
<dbReference type="GO" id="GO:0019899">
    <property type="term" value="F:enzyme binding"/>
    <property type="evidence" value="ECO:0007669"/>
    <property type="project" value="InterPro"/>
</dbReference>
<dbReference type="GO" id="GO:0015503">
    <property type="term" value="F:glutathione-regulated potassium exporter activity"/>
    <property type="evidence" value="ECO:0007669"/>
    <property type="project" value="UniProtKB-UniRule"/>
</dbReference>
<dbReference type="GO" id="GO:0015643">
    <property type="term" value="F:toxic substance binding"/>
    <property type="evidence" value="ECO:0007669"/>
    <property type="project" value="InterPro"/>
</dbReference>
<dbReference type="GO" id="GO:1902600">
    <property type="term" value="P:proton transmembrane transport"/>
    <property type="evidence" value="ECO:0007669"/>
    <property type="project" value="InterPro"/>
</dbReference>
<dbReference type="GO" id="GO:0051595">
    <property type="term" value="P:response to methylglyoxal"/>
    <property type="evidence" value="ECO:0007669"/>
    <property type="project" value="InterPro"/>
</dbReference>
<dbReference type="FunFam" id="1.20.1530.20:FF:000001">
    <property type="entry name" value="Glutathione-regulated potassium-efflux system protein KefB"/>
    <property type="match status" value="1"/>
</dbReference>
<dbReference type="FunFam" id="3.40.50.720:FF:000036">
    <property type="entry name" value="Glutathione-regulated potassium-efflux system protein KefB"/>
    <property type="match status" value="1"/>
</dbReference>
<dbReference type="Gene3D" id="1.20.1530.20">
    <property type="match status" value="1"/>
</dbReference>
<dbReference type="Gene3D" id="3.40.50.720">
    <property type="entry name" value="NAD(P)-binding Rossmann-like Domain"/>
    <property type="match status" value="1"/>
</dbReference>
<dbReference type="HAMAP" id="MF_01413">
    <property type="entry name" value="K_H_efflux_KefC"/>
    <property type="match status" value="1"/>
</dbReference>
<dbReference type="InterPro" id="IPR006153">
    <property type="entry name" value="Cation/H_exchanger_TM"/>
</dbReference>
<dbReference type="InterPro" id="IPR004771">
    <property type="entry name" value="K/H_exchanger"/>
</dbReference>
<dbReference type="InterPro" id="IPR023941">
    <property type="entry name" value="K_H_efflux_KefC"/>
</dbReference>
<dbReference type="InterPro" id="IPR006036">
    <property type="entry name" value="K_uptake_TrkA"/>
</dbReference>
<dbReference type="InterPro" id="IPR038770">
    <property type="entry name" value="Na+/solute_symporter_sf"/>
</dbReference>
<dbReference type="InterPro" id="IPR036291">
    <property type="entry name" value="NAD(P)-bd_dom_sf"/>
</dbReference>
<dbReference type="InterPro" id="IPR003148">
    <property type="entry name" value="RCK_N"/>
</dbReference>
<dbReference type="NCBIfam" id="TIGR00932">
    <property type="entry name" value="2a37"/>
    <property type="match status" value="1"/>
</dbReference>
<dbReference type="NCBIfam" id="NF002924">
    <property type="entry name" value="PRK03562.1"/>
    <property type="match status" value="1"/>
</dbReference>
<dbReference type="PANTHER" id="PTHR46157:SF3">
    <property type="entry name" value="GLUTATHIONE-REGULATED POTASSIUM-EFFLUX SYSTEM PROTEIN KEFC"/>
    <property type="match status" value="1"/>
</dbReference>
<dbReference type="PANTHER" id="PTHR46157">
    <property type="entry name" value="K(+) EFFLUX ANTIPORTER 3, CHLOROPLASTIC"/>
    <property type="match status" value="1"/>
</dbReference>
<dbReference type="Pfam" id="PF00999">
    <property type="entry name" value="Na_H_Exchanger"/>
    <property type="match status" value="1"/>
</dbReference>
<dbReference type="Pfam" id="PF02254">
    <property type="entry name" value="TrkA_N"/>
    <property type="match status" value="1"/>
</dbReference>
<dbReference type="PRINTS" id="PR00335">
    <property type="entry name" value="KUPTAKETRKA"/>
</dbReference>
<dbReference type="SUPFAM" id="SSF51735">
    <property type="entry name" value="NAD(P)-binding Rossmann-fold domains"/>
    <property type="match status" value="1"/>
</dbReference>
<dbReference type="PROSITE" id="PS51201">
    <property type="entry name" value="RCK_N"/>
    <property type="match status" value="1"/>
</dbReference>
<organism>
    <name type="scientific">Klebsiella pneumoniae subsp. pneumoniae (strain ATCC 700721 / MGH 78578)</name>
    <dbReference type="NCBI Taxonomy" id="272620"/>
    <lineage>
        <taxon>Bacteria</taxon>
        <taxon>Pseudomonadati</taxon>
        <taxon>Pseudomonadota</taxon>
        <taxon>Gammaproteobacteria</taxon>
        <taxon>Enterobacterales</taxon>
        <taxon>Enterobacteriaceae</taxon>
        <taxon>Klebsiella/Raoultella group</taxon>
        <taxon>Klebsiella</taxon>
        <taxon>Klebsiella pneumoniae complex</taxon>
    </lineage>
</organism>
<proteinExistence type="inferred from homology"/>